<comment type="function">
    <text evidence="1 2">Probable calcium-dependent phospholipid-binding protein that may play a role in calcium-mediated intracellular processes. Plays a role in dendrite formation by melanocytes.</text>
</comment>
<comment type="cofactor">
    <cofactor evidence="3">
        <name>Ca(2+)</name>
        <dbReference type="ChEBI" id="CHEBI:29108"/>
    </cofactor>
    <text evidence="3">Binds 3 Ca(2+) ions per C2 domain.</text>
</comment>
<comment type="subcellular location">
    <subcellularLocation>
        <location evidence="6">Perikaryon</location>
    </subcellularLocation>
    <subcellularLocation>
        <location evidence="6">Cell projection</location>
    </subcellularLocation>
</comment>
<comment type="tissue specificity">
    <text evidence="6">Expressed in the cerebra and cerebellum of newborn brain. Expressed in the eye, lung and muscles but weakly expressed in the adult brain (at protein level) (PubMed:18614158).</text>
</comment>
<comment type="developmental stage">
    <text evidence="6">Expressed at the ventricular zone and subventricular zone areas, in the tectum, frontal cortex, ganglionic eminence, dorsal thalamus, hippocampus and tegmentum of the embryonic brain from 12.5 to 14.5 dpc. Expressed in neural progenitor cells (at protein level). Expressed in the embryonic brain from 10.5 to 17.5 dpc. Expressed in the telencephalon, mesencephalon and rhombencephalon areas from 11.5 to 12.5 dpc. Expressed in the developing central nervous system (CNS), such as the frontal cortex, hypothalamus and ventricular zones along the IV ventricle and aquaeductus mesencephali at 13.5 dpc (PubMed:18614158).</text>
</comment>
<comment type="similarity">
    <text evidence="7">Belongs to the copine family.</text>
</comment>
<feature type="chain" id="PRO_0000144844" description="Copine-5">
    <location>
        <begin position="1"/>
        <end position="593"/>
    </location>
</feature>
<feature type="domain" description="C2 1" evidence="3">
    <location>
        <begin position="2"/>
        <end position="134"/>
    </location>
</feature>
<feature type="domain" description="C2 2" evidence="3">
    <location>
        <begin position="161"/>
        <end position="284"/>
    </location>
</feature>
<feature type="domain" description="VWFA" evidence="4">
    <location>
        <begin position="328"/>
        <end position="554"/>
    </location>
</feature>
<feature type="region of interest" description="Disordered" evidence="5">
    <location>
        <begin position="562"/>
        <end position="593"/>
    </location>
</feature>
<feature type="compositionally biased region" description="Pro residues" evidence="5">
    <location>
        <begin position="565"/>
        <end position="587"/>
    </location>
</feature>
<feature type="binding site" evidence="3">
    <location>
        <position position="38"/>
    </location>
    <ligand>
        <name>Ca(2+)</name>
        <dbReference type="ChEBI" id="CHEBI:29108"/>
        <label>1</label>
    </ligand>
</feature>
<feature type="binding site" evidence="3">
    <location>
        <position position="38"/>
    </location>
    <ligand>
        <name>Ca(2+)</name>
        <dbReference type="ChEBI" id="CHEBI:29108"/>
        <label>2</label>
    </ligand>
</feature>
<feature type="binding site" evidence="3">
    <location>
        <position position="44"/>
    </location>
    <ligand>
        <name>Ca(2+)</name>
        <dbReference type="ChEBI" id="CHEBI:29108"/>
        <label>1</label>
    </ligand>
</feature>
<feature type="binding site" evidence="3">
    <location>
        <position position="98"/>
    </location>
    <ligand>
        <name>Ca(2+)</name>
        <dbReference type="ChEBI" id="CHEBI:29108"/>
        <label>1</label>
    </ligand>
</feature>
<feature type="binding site" evidence="3">
    <location>
        <position position="98"/>
    </location>
    <ligand>
        <name>Ca(2+)</name>
        <dbReference type="ChEBI" id="CHEBI:29108"/>
        <label>2</label>
    </ligand>
</feature>
<feature type="binding site" evidence="3">
    <location>
        <position position="100"/>
    </location>
    <ligand>
        <name>Ca(2+)</name>
        <dbReference type="ChEBI" id="CHEBI:29108"/>
        <label>1</label>
    </ligand>
</feature>
<feature type="binding site" evidence="3">
    <location>
        <position position="100"/>
    </location>
    <ligand>
        <name>Ca(2+)</name>
        <dbReference type="ChEBI" id="CHEBI:29108"/>
        <label>2</label>
    </ligand>
</feature>
<feature type="binding site" evidence="3">
    <location>
        <position position="100"/>
    </location>
    <ligand>
        <name>Ca(2+)</name>
        <dbReference type="ChEBI" id="CHEBI:29108"/>
        <label>3</label>
    </ligand>
</feature>
<feature type="binding site" evidence="3">
    <location>
        <position position="103"/>
    </location>
    <ligand>
        <name>Ca(2+)</name>
        <dbReference type="ChEBI" id="CHEBI:29108"/>
        <label>3</label>
    </ligand>
</feature>
<feature type="binding site" evidence="3">
    <location>
        <position position="108"/>
    </location>
    <ligand>
        <name>Ca(2+)</name>
        <dbReference type="ChEBI" id="CHEBI:29108"/>
        <label>3</label>
    </ligand>
</feature>
<feature type="binding site" evidence="3">
    <location>
        <position position="110"/>
    </location>
    <ligand>
        <name>Ca(2+)</name>
        <dbReference type="ChEBI" id="CHEBI:29108"/>
        <label>2</label>
    </ligand>
</feature>
<feature type="binding site" evidence="3">
    <location>
        <position position="110"/>
    </location>
    <ligand>
        <name>Ca(2+)</name>
        <dbReference type="ChEBI" id="CHEBI:29108"/>
        <label>3</label>
    </ligand>
</feature>
<feature type="binding site" evidence="3">
    <location>
        <position position="192"/>
    </location>
    <ligand>
        <name>Ca(2+)</name>
        <dbReference type="ChEBI" id="CHEBI:29108"/>
        <label>4</label>
    </ligand>
</feature>
<feature type="binding site" evidence="3">
    <location>
        <position position="192"/>
    </location>
    <ligand>
        <name>Ca(2+)</name>
        <dbReference type="ChEBI" id="CHEBI:29108"/>
        <label>5</label>
    </ligand>
</feature>
<feature type="binding site" evidence="3">
    <location>
        <position position="198"/>
    </location>
    <ligand>
        <name>Ca(2+)</name>
        <dbReference type="ChEBI" id="CHEBI:29108"/>
        <label>4</label>
    </ligand>
</feature>
<feature type="binding site" evidence="3">
    <location>
        <position position="254"/>
    </location>
    <ligand>
        <name>Ca(2+)</name>
        <dbReference type="ChEBI" id="CHEBI:29108"/>
        <label>4</label>
    </ligand>
</feature>
<feature type="binding site" evidence="3">
    <location>
        <position position="254"/>
    </location>
    <ligand>
        <name>Ca(2+)</name>
        <dbReference type="ChEBI" id="CHEBI:29108"/>
        <label>5</label>
    </ligand>
</feature>
<feature type="binding site" evidence="3">
    <location>
        <position position="256"/>
    </location>
    <ligand>
        <name>Ca(2+)</name>
        <dbReference type="ChEBI" id="CHEBI:29108"/>
        <label>4</label>
    </ligand>
</feature>
<feature type="binding site" evidence="3">
    <location>
        <position position="256"/>
    </location>
    <ligand>
        <name>Ca(2+)</name>
        <dbReference type="ChEBI" id="CHEBI:29108"/>
        <label>5</label>
    </ligand>
</feature>
<feature type="binding site" evidence="3">
    <location>
        <position position="262"/>
    </location>
    <ligand>
        <name>Ca(2+)</name>
        <dbReference type="ChEBI" id="CHEBI:29108"/>
        <label>5</label>
    </ligand>
</feature>
<feature type="modified residue" description="Phosphoserine" evidence="2">
    <location>
        <position position="19"/>
    </location>
</feature>
<feature type="modified residue" description="Phosphoserine" evidence="9">
    <location>
        <position position="103"/>
    </location>
</feature>
<feature type="modified residue" description="Phosphoserine" evidence="9">
    <location>
        <position position="140"/>
    </location>
</feature>
<organism>
    <name type="scientific">Mus musculus</name>
    <name type="common">Mouse</name>
    <dbReference type="NCBI Taxonomy" id="10090"/>
    <lineage>
        <taxon>Eukaryota</taxon>
        <taxon>Metazoa</taxon>
        <taxon>Chordata</taxon>
        <taxon>Craniata</taxon>
        <taxon>Vertebrata</taxon>
        <taxon>Euteleostomi</taxon>
        <taxon>Mammalia</taxon>
        <taxon>Eutheria</taxon>
        <taxon>Euarchontoglires</taxon>
        <taxon>Glires</taxon>
        <taxon>Rodentia</taxon>
        <taxon>Myomorpha</taxon>
        <taxon>Muroidea</taxon>
        <taxon>Muridae</taxon>
        <taxon>Murinae</taxon>
        <taxon>Mus</taxon>
        <taxon>Mus</taxon>
    </lineage>
</organism>
<name>CPNE5_MOUSE</name>
<evidence type="ECO:0000250" key="1">
    <source>
        <dbReference type="UniProtKB" id="Q99829"/>
    </source>
</evidence>
<evidence type="ECO:0000250" key="2">
    <source>
        <dbReference type="UniProtKB" id="Q9HCH3"/>
    </source>
</evidence>
<evidence type="ECO:0000255" key="3">
    <source>
        <dbReference type="PROSITE-ProRule" id="PRU00041"/>
    </source>
</evidence>
<evidence type="ECO:0000255" key="4">
    <source>
        <dbReference type="PROSITE-ProRule" id="PRU00219"/>
    </source>
</evidence>
<evidence type="ECO:0000256" key="5">
    <source>
        <dbReference type="SAM" id="MobiDB-lite"/>
    </source>
</evidence>
<evidence type="ECO:0000269" key="6">
    <source>
    </source>
</evidence>
<evidence type="ECO:0000305" key="7"/>
<evidence type="ECO:0000312" key="8">
    <source>
        <dbReference type="MGI" id="MGI:2385908"/>
    </source>
</evidence>
<evidence type="ECO:0007744" key="9">
    <source>
    </source>
</evidence>
<dbReference type="EMBL" id="AK044042">
    <property type="protein sequence ID" value="BAC31750.1"/>
    <property type="molecule type" value="mRNA"/>
</dbReference>
<dbReference type="EMBL" id="BC036971">
    <property type="protein sequence ID" value="AAH36971.1"/>
    <property type="molecule type" value="mRNA"/>
</dbReference>
<dbReference type="CCDS" id="CCDS28592.1"/>
<dbReference type="RefSeq" id="NP_694806.1">
    <property type="nucleotide sequence ID" value="NM_153166.2"/>
</dbReference>
<dbReference type="SMR" id="Q8JZW4"/>
<dbReference type="BioGRID" id="232154">
    <property type="interactions" value="1"/>
</dbReference>
<dbReference type="FunCoup" id="Q8JZW4">
    <property type="interactions" value="174"/>
</dbReference>
<dbReference type="STRING" id="10090.ENSMUSP00000024805"/>
<dbReference type="iPTMnet" id="Q8JZW4"/>
<dbReference type="PhosphoSitePlus" id="Q8JZW4"/>
<dbReference type="SwissPalm" id="Q8JZW4"/>
<dbReference type="jPOST" id="Q8JZW4"/>
<dbReference type="PaxDb" id="10090-ENSMUSP00000024805"/>
<dbReference type="PeptideAtlas" id="Q8JZW4"/>
<dbReference type="ProteomicsDB" id="283815"/>
<dbReference type="Antibodypedia" id="29719">
    <property type="antibodies" value="103 antibodies from 20 providers"/>
</dbReference>
<dbReference type="DNASU" id="240058"/>
<dbReference type="Ensembl" id="ENSMUST00000024805.15">
    <property type="protein sequence ID" value="ENSMUSP00000024805.8"/>
    <property type="gene ID" value="ENSMUSG00000024008.17"/>
</dbReference>
<dbReference type="GeneID" id="240058"/>
<dbReference type="KEGG" id="mmu:240058"/>
<dbReference type="UCSC" id="uc008bsj.2">
    <property type="organism name" value="mouse"/>
</dbReference>
<dbReference type="AGR" id="MGI:2385908"/>
<dbReference type="CTD" id="57699"/>
<dbReference type="MGI" id="MGI:2385908">
    <property type="gene designation" value="Cpne5"/>
</dbReference>
<dbReference type="VEuPathDB" id="HostDB:ENSMUSG00000024008"/>
<dbReference type="eggNOG" id="KOG1327">
    <property type="taxonomic scope" value="Eukaryota"/>
</dbReference>
<dbReference type="GeneTree" id="ENSGT00940000156194"/>
<dbReference type="HOGENOM" id="CLU_020452_3_2_1"/>
<dbReference type="InParanoid" id="Q8JZW4"/>
<dbReference type="OMA" id="KEQATMQ"/>
<dbReference type="OrthoDB" id="5855668at2759"/>
<dbReference type="PhylomeDB" id="Q8JZW4"/>
<dbReference type="TreeFam" id="TF316419"/>
<dbReference type="BioGRID-ORCS" id="240058">
    <property type="hits" value="1 hit in 76 CRISPR screens"/>
</dbReference>
<dbReference type="CD-CODE" id="CE726F99">
    <property type="entry name" value="Postsynaptic density"/>
</dbReference>
<dbReference type="ChiTaRS" id="Cpne5">
    <property type="organism name" value="mouse"/>
</dbReference>
<dbReference type="PRO" id="PR:Q8JZW4"/>
<dbReference type="Proteomes" id="UP000000589">
    <property type="component" value="Chromosome 17"/>
</dbReference>
<dbReference type="RNAct" id="Q8JZW4">
    <property type="molecule type" value="protein"/>
</dbReference>
<dbReference type="Bgee" id="ENSMUSG00000024008">
    <property type="expression patterns" value="Expressed in caudate-putamen and 173 other cell types or tissues"/>
</dbReference>
<dbReference type="ExpressionAtlas" id="Q8JZW4">
    <property type="expression patterns" value="baseline and differential"/>
</dbReference>
<dbReference type="GO" id="GO:0043005">
    <property type="term" value="C:neuron projection"/>
    <property type="evidence" value="ECO:0000314"/>
    <property type="project" value="MGI"/>
</dbReference>
<dbReference type="GO" id="GO:0043025">
    <property type="term" value="C:neuronal cell body"/>
    <property type="evidence" value="ECO:0000314"/>
    <property type="project" value="MGI"/>
</dbReference>
<dbReference type="GO" id="GO:0043204">
    <property type="term" value="C:perikaryon"/>
    <property type="evidence" value="ECO:0007669"/>
    <property type="project" value="UniProtKB-SubCell"/>
</dbReference>
<dbReference type="GO" id="GO:0005544">
    <property type="term" value="F:calcium-dependent phospholipid binding"/>
    <property type="evidence" value="ECO:0007669"/>
    <property type="project" value="InterPro"/>
</dbReference>
<dbReference type="GO" id="GO:0046872">
    <property type="term" value="F:metal ion binding"/>
    <property type="evidence" value="ECO:0007669"/>
    <property type="project" value="UniProtKB-KW"/>
</dbReference>
<dbReference type="GO" id="GO:0030154">
    <property type="term" value="P:cell differentiation"/>
    <property type="evidence" value="ECO:0007669"/>
    <property type="project" value="UniProtKB-KW"/>
</dbReference>
<dbReference type="GO" id="GO:1903861">
    <property type="term" value="P:positive regulation of dendrite extension"/>
    <property type="evidence" value="ECO:0007669"/>
    <property type="project" value="Ensembl"/>
</dbReference>
<dbReference type="CDD" id="cd04048">
    <property type="entry name" value="C2A_Copine"/>
    <property type="match status" value="1"/>
</dbReference>
<dbReference type="CDD" id="cd04047">
    <property type="entry name" value="C2B_Copine"/>
    <property type="match status" value="1"/>
</dbReference>
<dbReference type="CDD" id="cd01459">
    <property type="entry name" value="vWA_copine_like"/>
    <property type="match status" value="1"/>
</dbReference>
<dbReference type="FunFam" id="2.60.40.150:FF:000117">
    <property type="entry name" value="copine-5 isoform X1"/>
    <property type="match status" value="1"/>
</dbReference>
<dbReference type="FunFam" id="2.60.40.150:FF:000013">
    <property type="entry name" value="copine-9 isoform X1"/>
    <property type="match status" value="1"/>
</dbReference>
<dbReference type="Gene3D" id="2.60.40.150">
    <property type="entry name" value="C2 domain"/>
    <property type="match status" value="2"/>
</dbReference>
<dbReference type="InterPro" id="IPR000008">
    <property type="entry name" value="C2_dom"/>
</dbReference>
<dbReference type="InterPro" id="IPR035892">
    <property type="entry name" value="C2_domain_sf"/>
</dbReference>
<dbReference type="InterPro" id="IPR037768">
    <property type="entry name" value="C2B_Copine"/>
</dbReference>
<dbReference type="InterPro" id="IPR045052">
    <property type="entry name" value="Copine"/>
</dbReference>
<dbReference type="InterPro" id="IPR010734">
    <property type="entry name" value="Copine_C"/>
</dbReference>
<dbReference type="InterPro" id="IPR002035">
    <property type="entry name" value="VWF_A"/>
</dbReference>
<dbReference type="InterPro" id="IPR036465">
    <property type="entry name" value="vWFA_dom_sf"/>
</dbReference>
<dbReference type="PANTHER" id="PTHR10857">
    <property type="entry name" value="COPINE"/>
    <property type="match status" value="1"/>
</dbReference>
<dbReference type="PANTHER" id="PTHR10857:SF51">
    <property type="entry name" value="COPINE-5"/>
    <property type="match status" value="1"/>
</dbReference>
<dbReference type="Pfam" id="PF00168">
    <property type="entry name" value="C2"/>
    <property type="match status" value="2"/>
</dbReference>
<dbReference type="Pfam" id="PF07002">
    <property type="entry name" value="Copine"/>
    <property type="match status" value="1"/>
</dbReference>
<dbReference type="SMART" id="SM00239">
    <property type="entry name" value="C2"/>
    <property type="match status" value="2"/>
</dbReference>
<dbReference type="SMART" id="SM00327">
    <property type="entry name" value="VWA"/>
    <property type="match status" value="1"/>
</dbReference>
<dbReference type="SUPFAM" id="SSF49562">
    <property type="entry name" value="C2 domain (Calcium/lipid-binding domain, CaLB)"/>
    <property type="match status" value="2"/>
</dbReference>
<dbReference type="SUPFAM" id="SSF53300">
    <property type="entry name" value="vWA-like"/>
    <property type="match status" value="1"/>
</dbReference>
<dbReference type="PROSITE" id="PS50004">
    <property type="entry name" value="C2"/>
    <property type="match status" value="2"/>
</dbReference>
<dbReference type="PROSITE" id="PS50234">
    <property type="entry name" value="VWFA"/>
    <property type="match status" value="1"/>
</dbReference>
<reference key="1">
    <citation type="journal article" date="2005" name="Science">
        <title>The transcriptional landscape of the mammalian genome.</title>
        <authorList>
            <person name="Carninci P."/>
            <person name="Kasukawa T."/>
            <person name="Katayama S."/>
            <person name="Gough J."/>
            <person name="Frith M.C."/>
            <person name="Maeda N."/>
            <person name="Oyama R."/>
            <person name="Ravasi T."/>
            <person name="Lenhard B."/>
            <person name="Wells C."/>
            <person name="Kodzius R."/>
            <person name="Shimokawa K."/>
            <person name="Bajic V.B."/>
            <person name="Brenner S.E."/>
            <person name="Batalov S."/>
            <person name="Forrest A.R."/>
            <person name="Zavolan M."/>
            <person name="Davis M.J."/>
            <person name="Wilming L.G."/>
            <person name="Aidinis V."/>
            <person name="Allen J.E."/>
            <person name="Ambesi-Impiombato A."/>
            <person name="Apweiler R."/>
            <person name="Aturaliya R.N."/>
            <person name="Bailey T.L."/>
            <person name="Bansal M."/>
            <person name="Baxter L."/>
            <person name="Beisel K.W."/>
            <person name="Bersano T."/>
            <person name="Bono H."/>
            <person name="Chalk A.M."/>
            <person name="Chiu K.P."/>
            <person name="Choudhary V."/>
            <person name="Christoffels A."/>
            <person name="Clutterbuck D.R."/>
            <person name="Crowe M.L."/>
            <person name="Dalla E."/>
            <person name="Dalrymple B.P."/>
            <person name="de Bono B."/>
            <person name="Della Gatta G."/>
            <person name="di Bernardo D."/>
            <person name="Down T."/>
            <person name="Engstrom P."/>
            <person name="Fagiolini M."/>
            <person name="Faulkner G."/>
            <person name="Fletcher C.F."/>
            <person name="Fukushima T."/>
            <person name="Furuno M."/>
            <person name="Futaki S."/>
            <person name="Gariboldi M."/>
            <person name="Georgii-Hemming P."/>
            <person name="Gingeras T.R."/>
            <person name="Gojobori T."/>
            <person name="Green R.E."/>
            <person name="Gustincich S."/>
            <person name="Harbers M."/>
            <person name="Hayashi Y."/>
            <person name="Hensch T.K."/>
            <person name="Hirokawa N."/>
            <person name="Hill D."/>
            <person name="Huminiecki L."/>
            <person name="Iacono M."/>
            <person name="Ikeo K."/>
            <person name="Iwama A."/>
            <person name="Ishikawa T."/>
            <person name="Jakt M."/>
            <person name="Kanapin A."/>
            <person name="Katoh M."/>
            <person name="Kawasawa Y."/>
            <person name="Kelso J."/>
            <person name="Kitamura H."/>
            <person name="Kitano H."/>
            <person name="Kollias G."/>
            <person name="Krishnan S.P."/>
            <person name="Kruger A."/>
            <person name="Kummerfeld S.K."/>
            <person name="Kurochkin I.V."/>
            <person name="Lareau L.F."/>
            <person name="Lazarevic D."/>
            <person name="Lipovich L."/>
            <person name="Liu J."/>
            <person name="Liuni S."/>
            <person name="McWilliam S."/>
            <person name="Madan Babu M."/>
            <person name="Madera M."/>
            <person name="Marchionni L."/>
            <person name="Matsuda H."/>
            <person name="Matsuzawa S."/>
            <person name="Miki H."/>
            <person name="Mignone F."/>
            <person name="Miyake S."/>
            <person name="Morris K."/>
            <person name="Mottagui-Tabar S."/>
            <person name="Mulder N."/>
            <person name="Nakano N."/>
            <person name="Nakauchi H."/>
            <person name="Ng P."/>
            <person name="Nilsson R."/>
            <person name="Nishiguchi S."/>
            <person name="Nishikawa S."/>
            <person name="Nori F."/>
            <person name="Ohara O."/>
            <person name="Okazaki Y."/>
            <person name="Orlando V."/>
            <person name="Pang K.C."/>
            <person name="Pavan W.J."/>
            <person name="Pavesi G."/>
            <person name="Pesole G."/>
            <person name="Petrovsky N."/>
            <person name="Piazza S."/>
            <person name="Reed J."/>
            <person name="Reid J.F."/>
            <person name="Ring B.Z."/>
            <person name="Ringwald M."/>
            <person name="Rost B."/>
            <person name="Ruan Y."/>
            <person name="Salzberg S.L."/>
            <person name="Sandelin A."/>
            <person name="Schneider C."/>
            <person name="Schoenbach C."/>
            <person name="Sekiguchi K."/>
            <person name="Semple C.A."/>
            <person name="Seno S."/>
            <person name="Sessa L."/>
            <person name="Sheng Y."/>
            <person name="Shibata Y."/>
            <person name="Shimada H."/>
            <person name="Shimada K."/>
            <person name="Silva D."/>
            <person name="Sinclair B."/>
            <person name="Sperling S."/>
            <person name="Stupka E."/>
            <person name="Sugiura K."/>
            <person name="Sultana R."/>
            <person name="Takenaka Y."/>
            <person name="Taki K."/>
            <person name="Tammoja K."/>
            <person name="Tan S.L."/>
            <person name="Tang S."/>
            <person name="Taylor M.S."/>
            <person name="Tegner J."/>
            <person name="Teichmann S.A."/>
            <person name="Ueda H.R."/>
            <person name="van Nimwegen E."/>
            <person name="Verardo R."/>
            <person name="Wei C.L."/>
            <person name="Yagi K."/>
            <person name="Yamanishi H."/>
            <person name="Zabarovsky E."/>
            <person name="Zhu S."/>
            <person name="Zimmer A."/>
            <person name="Hide W."/>
            <person name="Bult C."/>
            <person name="Grimmond S.M."/>
            <person name="Teasdale R.D."/>
            <person name="Liu E.T."/>
            <person name="Brusic V."/>
            <person name="Quackenbush J."/>
            <person name="Wahlestedt C."/>
            <person name="Mattick J.S."/>
            <person name="Hume D.A."/>
            <person name="Kai C."/>
            <person name="Sasaki D."/>
            <person name="Tomaru Y."/>
            <person name="Fukuda S."/>
            <person name="Kanamori-Katayama M."/>
            <person name="Suzuki M."/>
            <person name="Aoki J."/>
            <person name="Arakawa T."/>
            <person name="Iida J."/>
            <person name="Imamura K."/>
            <person name="Itoh M."/>
            <person name="Kato T."/>
            <person name="Kawaji H."/>
            <person name="Kawagashira N."/>
            <person name="Kawashima T."/>
            <person name="Kojima M."/>
            <person name="Kondo S."/>
            <person name="Konno H."/>
            <person name="Nakano K."/>
            <person name="Ninomiya N."/>
            <person name="Nishio T."/>
            <person name="Okada M."/>
            <person name="Plessy C."/>
            <person name="Shibata K."/>
            <person name="Shiraki T."/>
            <person name="Suzuki S."/>
            <person name="Tagami M."/>
            <person name="Waki K."/>
            <person name="Watahiki A."/>
            <person name="Okamura-Oho Y."/>
            <person name="Suzuki H."/>
            <person name="Kawai J."/>
            <person name="Hayashizaki Y."/>
        </authorList>
    </citation>
    <scope>NUCLEOTIDE SEQUENCE [LARGE SCALE MRNA]</scope>
    <source>
        <strain>C57BL/6J</strain>
        <tissue>Brain cortex</tissue>
    </source>
</reference>
<reference key="2">
    <citation type="journal article" date="2004" name="Genome Res.">
        <title>The status, quality, and expansion of the NIH full-length cDNA project: the Mammalian Gene Collection (MGC).</title>
        <authorList>
            <consortium name="The MGC Project Team"/>
        </authorList>
    </citation>
    <scope>NUCLEOTIDE SEQUENCE [LARGE SCALE MRNA]</scope>
    <source>
        <tissue>Retina</tissue>
    </source>
</reference>
<reference key="3">
    <citation type="journal article" date="2008" name="Brain Res.">
        <title>Localization and cellular distribution of CPNE5 in embryonic mouse brain.</title>
        <authorList>
            <person name="Ding X."/>
            <person name="Jin Y."/>
            <person name="Wu Y."/>
            <person name="Wu Y."/>
            <person name="Wu H."/>
            <person name="Xiong L."/>
            <person name="Song X."/>
            <person name="Liu S."/>
            <person name="Fan W."/>
            <person name="Fan M."/>
        </authorList>
    </citation>
    <scope>SUBCELLULAR LOCATION</scope>
    <scope>TISSUE SPECIFICITY</scope>
    <scope>DEVELOPMENTAL STAGE</scope>
</reference>
<reference key="4">
    <citation type="journal article" date="2010" name="Cell">
        <title>A tissue-specific atlas of mouse protein phosphorylation and expression.</title>
        <authorList>
            <person name="Huttlin E.L."/>
            <person name="Jedrychowski M.P."/>
            <person name="Elias J.E."/>
            <person name="Goswami T."/>
            <person name="Rad R."/>
            <person name="Beausoleil S.A."/>
            <person name="Villen J."/>
            <person name="Haas W."/>
            <person name="Sowa M.E."/>
            <person name="Gygi S.P."/>
        </authorList>
    </citation>
    <scope>PHOSPHORYLATION [LARGE SCALE ANALYSIS] AT SER-103 AND SER-140</scope>
    <scope>IDENTIFICATION BY MASS SPECTROMETRY [LARGE SCALE ANALYSIS]</scope>
    <source>
        <tissue>Brain</tissue>
    </source>
</reference>
<sequence>MEQPEDMASLSEFDSLAGSIPATKVEITVSCRNLLDKDMFSKSDPLCVMYTQGMENKQWREFGRTEVIDNTLNPDFVRKFIVDYFFEEKQNLRFDLYDVDSKSPDLSKHDFLGQAFCTLGEIVGSSGSRLEKPLTIGTFSLNSRTGKPMPAVSNGGVPGKKCGTIILSAEELSNCRDVATMQFCANKLDKKDFFGKSDPFLVFYRSNEDGTFTICHKTEVMKNTLNPVWQTFSIPVRALCNGDYDRTIKVEVYDWDRDGSHDFIGEFTTSYRELARGQSQFNIYEVINPKKKMKKKKYVNSGTVTLLSFAVESESTFLDYIKGGTQINFTVAIDFTASNGNPSQSTSLHYMSPYQLNAYALALTAVGEIIQHYDSDKMFPALGFGAKLPPDGRVSHEFPLNGNQENPSCCGIDGILEAYHSSLRTVQLYGPTNFAPVVTHVARNAAAVQDGSQYSVLLIITDGVISDMAQTKEAIVNAAKLPMSIIIVGVGQAEFDAMVELDGDDVRISSRGKLAERDIVQFVPFRDYVDRTGNHVLSMARLARDVLAEIPDQLVSYMKAQGIRPRPPPAAPAQSPPQSPAHSPPGSPVHTHI</sequence>
<keyword id="KW-0106">Calcium</keyword>
<keyword id="KW-0966">Cell projection</keyword>
<keyword id="KW-0221">Differentiation</keyword>
<keyword id="KW-0479">Metal-binding</keyword>
<keyword id="KW-0597">Phosphoprotein</keyword>
<keyword id="KW-1185">Reference proteome</keyword>
<keyword id="KW-0677">Repeat</keyword>
<accession>Q8JZW4</accession>
<gene>
    <name evidence="8" type="primary">Cpne5</name>
</gene>
<protein>
    <recommendedName>
        <fullName evidence="7">Copine-5</fullName>
    </recommendedName>
    <alternativeName>
        <fullName evidence="1 8">Copine V</fullName>
    </alternativeName>
</protein>
<proteinExistence type="evidence at protein level"/>